<reference key="1">
    <citation type="submission" date="2007-03" db="EMBL/GenBank/DDBJ databases">
        <authorList>
            <person name="Heidelberg J."/>
        </authorList>
    </citation>
    <scope>NUCLEOTIDE SEQUENCE [LARGE SCALE GENOMIC DNA]</scope>
    <source>
        <strain>ATCC 39541 / Classical Ogawa 395 / O395</strain>
    </source>
</reference>
<reference key="2">
    <citation type="journal article" date="2008" name="PLoS ONE">
        <title>A recalibrated molecular clock and independent origins for the cholera pandemic clones.</title>
        <authorList>
            <person name="Feng L."/>
            <person name="Reeves P.R."/>
            <person name="Lan R."/>
            <person name="Ren Y."/>
            <person name="Gao C."/>
            <person name="Zhou Z."/>
            <person name="Ren Y."/>
            <person name="Cheng J."/>
            <person name="Wang W."/>
            <person name="Wang J."/>
            <person name="Qian W."/>
            <person name="Li D."/>
            <person name="Wang L."/>
        </authorList>
    </citation>
    <scope>NUCLEOTIDE SEQUENCE [LARGE SCALE GENOMIC DNA]</scope>
    <source>
        <strain>ATCC 39541 / Classical Ogawa 395 / O395</strain>
    </source>
</reference>
<comment type="function">
    <text evidence="1">One of the proteins required for the normal export of preproteins out of the cell cytoplasm. It is a molecular chaperone that binds to a subset of precursor proteins, maintaining them in a translocation-competent state. It also specifically binds to its receptor SecA.</text>
</comment>
<comment type="subunit">
    <text evidence="1">Homotetramer, a dimer of dimers. One homotetramer interacts with 1 SecA dimer.</text>
</comment>
<comment type="subcellular location">
    <subcellularLocation>
        <location evidence="1">Cytoplasm</location>
    </subcellularLocation>
</comment>
<comment type="similarity">
    <text evidence="1">Belongs to the SecB family.</text>
</comment>
<evidence type="ECO:0000255" key="1">
    <source>
        <dbReference type="HAMAP-Rule" id="MF_00821"/>
    </source>
</evidence>
<protein>
    <recommendedName>
        <fullName evidence="1">Protein-export protein SecB</fullName>
    </recommendedName>
</protein>
<feature type="chain" id="PRO_1000072874" description="Protein-export protein SecB">
    <location>
        <begin position="1"/>
        <end position="154"/>
    </location>
</feature>
<gene>
    <name evidence="1" type="primary">secB</name>
    <name type="ordered locus">VC0395_A2227</name>
    <name type="ordered locus">VC395_2766</name>
</gene>
<name>SECB_VIBC3</name>
<accession>A5F4Y6</accession>
<accession>C3LXQ1</accession>
<proteinExistence type="inferred from homology"/>
<keyword id="KW-0143">Chaperone</keyword>
<keyword id="KW-0963">Cytoplasm</keyword>
<keyword id="KW-0653">Protein transport</keyword>
<keyword id="KW-0811">Translocation</keyword>
<keyword id="KW-0813">Transport</keyword>
<dbReference type="EMBL" id="CP000627">
    <property type="protein sequence ID" value="ABQ20808.1"/>
    <property type="molecule type" value="Genomic_DNA"/>
</dbReference>
<dbReference type="EMBL" id="CP001235">
    <property type="protein sequence ID" value="ACP10751.1"/>
    <property type="molecule type" value="Genomic_DNA"/>
</dbReference>
<dbReference type="RefSeq" id="WP_000796512.1">
    <property type="nucleotide sequence ID" value="NZ_JAACZH010000007.1"/>
</dbReference>
<dbReference type="SMR" id="A5F4Y6"/>
<dbReference type="GeneID" id="69718748"/>
<dbReference type="KEGG" id="vco:VC0395_A2227"/>
<dbReference type="KEGG" id="vcr:VC395_2766"/>
<dbReference type="PATRIC" id="fig|345073.21.peg.2663"/>
<dbReference type="eggNOG" id="COG1952">
    <property type="taxonomic scope" value="Bacteria"/>
</dbReference>
<dbReference type="HOGENOM" id="CLU_111574_1_0_6"/>
<dbReference type="OrthoDB" id="9795145at2"/>
<dbReference type="Proteomes" id="UP000000249">
    <property type="component" value="Chromosome 2"/>
</dbReference>
<dbReference type="GO" id="GO:0005737">
    <property type="term" value="C:cytoplasm"/>
    <property type="evidence" value="ECO:0007669"/>
    <property type="project" value="UniProtKB-SubCell"/>
</dbReference>
<dbReference type="GO" id="GO:0051082">
    <property type="term" value="F:unfolded protein binding"/>
    <property type="evidence" value="ECO:0007669"/>
    <property type="project" value="InterPro"/>
</dbReference>
<dbReference type="GO" id="GO:0006457">
    <property type="term" value="P:protein folding"/>
    <property type="evidence" value="ECO:0007669"/>
    <property type="project" value="UniProtKB-UniRule"/>
</dbReference>
<dbReference type="GO" id="GO:0051262">
    <property type="term" value="P:protein tetramerization"/>
    <property type="evidence" value="ECO:0007669"/>
    <property type="project" value="InterPro"/>
</dbReference>
<dbReference type="GO" id="GO:0015031">
    <property type="term" value="P:protein transport"/>
    <property type="evidence" value="ECO:0007669"/>
    <property type="project" value="UniProtKB-UniRule"/>
</dbReference>
<dbReference type="Gene3D" id="3.10.420.10">
    <property type="entry name" value="SecB-like"/>
    <property type="match status" value="1"/>
</dbReference>
<dbReference type="HAMAP" id="MF_00821">
    <property type="entry name" value="SecB"/>
    <property type="match status" value="1"/>
</dbReference>
<dbReference type="InterPro" id="IPR003708">
    <property type="entry name" value="SecB"/>
</dbReference>
<dbReference type="InterPro" id="IPR035958">
    <property type="entry name" value="SecB-like_sf"/>
</dbReference>
<dbReference type="NCBIfam" id="NF004393">
    <property type="entry name" value="PRK05751.1-4"/>
    <property type="match status" value="1"/>
</dbReference>
<dbReference type="NCBIfam" id="TIGR00809">
    <property type="entry name" value="secB"/>
    <property type="match status" value="1"/>
</dbReference>
<dbReference type="PANTHER" id="PTHR36918">
    <property type="match status" value="1"/>
</dbReference>
<dbReference type="PANTHER" id="PTHR36918:SF1">
    <property type="entry name" value="PROTEIN-EXPORT PROTEIN SECB"/>
    <property type="match status" value="1"/>
</dbReference>
<dbReference type="Pfam" id="PF02556">
    <property type="entry name" value="SecB"/>
    <property type="match status" value="1"/>
</dbReference>
<dbReference type="PRINTS" id="PR01594">
    <property type="entry name" value="SECBCHAPRONE"/>
</dbReference>
<dbReference type="SUPFAM" id="SSF54611">
    <property type="entry name" value="SecB-like"/>
    <property type="match status" value="1"/>
</dbReference>
<sequence length="154" mass="17035">MAEAAQAPQQQFAIQRIYLKDVSFEAPSSPVMFQKEWNPDVKLDLDTQSRELGQGVYEVVLRLTVTVKNAEETAFLCEVQQAGIFSAEQMEAGQLAHCLGAFCPNILFPYARETISSLVVKGTFPQLNLAPVNFDALFMNYLQQQAQEGATANA</sequence>
<organism>
    <name type="scientific">Vibrio cholerae serotype O1 (strain ATCC 39541 / Classical Ogawa 395 / O395)</name>
    <dbReference type="NCBI Taxonomy" id="345073"/>
    <lineage>
        <taxon>Bacteria</taxon>
        <taxon>Pseudomonadati</taxon>
        <taxon>Pseudomonadota</taxon>
        <taxon>Gammaproteobacteria</taxon>
        <taxon>Vibrionales</taxon>
        <taxon>Vibrionaceae</taxon>
        <taxon>Vibrio</taxon>
    </lineage>
</organism>